<comment type="subcellular location">
    <subcellularLocation>
        <location evidence="2">Cell membrane</location>
        <topology evidence="2">Multi-pass membrane protein</topology>
    </subcellularLocation>
</comment>
<name>Y338_TREPA</name>
<sequence length="162" mass="18367">MARVYILFFSVFFVFPLFSEDAARDVEPSDAPVPYEDTEFSLWQKELYRFEALSIGAFPIVTLLSFITYDIIRLIQQWSTKPPTWWALIIPGAELPPLSTKERAIVFGVAVGISVTIGLIDVTYRAVKRAIHRRSLERSQLVPDPIELVPLDSFVEGTDDST</sequence>
<feature type="signal peptide" evidence="1">
    <location>
        <begin position="1"/>
        <end position="19"/>
    </location>
</feature>
<feature type="chain" id="PRO_0000014245" description="Uncharacterized protein TP_0338">
    <location>
        <begin position="20"/>
        <end position="162"/>
    </location>
</feature>
<feature type="transmembrane region" description="Helical" evidence="1">
    <location>
        <begin position="53"/>
        <end position="75"/>
    </location>
</feature>
<feature type="transmembrane region" description="Helical" evidence="1">
    <location>
        <begin position="105"/>
        <end position="127"/>
    </location>
</feature>
<proteinExistence type="inferred from homology"/>
<gene>
    <name type="ordered locus">TP_0338</name>
</gene>
<organism>
    <name type="scientific">Treponema pallidum (strain Nichols)</name>
    <dbReference type="NCBI Taxonomy" id="243276"/>
    <lineage>
        <taxon>Bacteria</taxon>
        <taxon>Pseudomonadati</taxon>
        <taxon>Spirochaetota</taxon>
        <taxon>Spirochaetia</taxon>
        <taxon>Spirochaetales</taxon>
        <taxon>Treponemataceae</taxon>
        <taxon>Treponema</taxon>
    </lineage>
</organism>
<reference key="1">
    <citation type="journal article" date="1998" name="Science">
        <title>Complete genome sequence of Treponema pallidum, the syphilis spirochete.</title>
        <authorList>
            <person name="Fraser C.M."/>
            <person name="Norris S.J."/>
            <person name="Weinstock G.M."/>
            <person name="White O."/>
            <person name="Sutton G.G."/>
            <person name="Dodson R.J."/>
            <person name="Gwinn M.L."/>
            <person name="Hickey E.K."/>
            <person name="Clayton R.A."/>
            <person name="Ketchum K.A."/>
            <person name="Sodergren E."/>
            <person name="Hardham J.M."/>
            <person name="McLeod M.P."/>
            <person name="Salzberg S.L."/>
            <person name="Peterson J.D."/>
            <person name="Khalak H.G."/>
            <person name="Richardson D.L."/>
            <person name="Howell J.K."/>
            <person name="Chidambaram M."/>
            <person name="Utterback T.R."/>
            <person name="McDonald L.A."/>
            <person name="Artiach P."/>
            <person name="Bowman C."/>
            <person name="Cotton M.D."/>
            <person name="Fujii C."/>
            <person name="Garland S.A."/>
            <person name="Hatch B."/>
            <person name="Horst K."/>
            <person name="Roberts K.M."/>
            <person name="Sandusky M."/>
            <person name="Weidman J.F."/>
            <person name="Smith H.O."/>
            <person name="Venter J.C."/>
        </authorList>
    </citation>
    <scope>NUCLEOTIDE SEQUENCE [LARGE SCALE GENOMIC DNA]</scope>
    <source>
        <strain>Nichols</strain>
    </source>
</reference>
<protein>
    <recommendedName>
        <fullName>Uncharacterized protein TP_0338</fullName>
    </recommendedName>
</protein>
<accession>O83358</accession>
<evidence type="ECO:0000255" key="1"/>
<evidence type="ECO:0000305" key="2"/>
<dbReference type="EMBL" id="AE000520">
    <property type="protein sequence ID" value="AAC65329.1"/>
    <property type="molecule type" value="Genomic_DNA"/>
</dbReference>
<dbReference type="PIR" id="H71337">
    <property type="entry name" value="H71337"/>
</dbReference>
<dbReference type="RefSeq" id="WP_010881786.1">
    <property type="nucleotide sequence ID" value="NC_021490.2"/>
</dbReference>
<dbReference type="SMR" id="O83358"/>
<dbReference type="IntAct" id="O83358">
    <property type="interactions" value="3"/>
</dbReference>
<dbReference type="STRING" id="243276.TP_0338"/>
<dbReference type="EnsemblBacteria" id="AAC65329">
    <property type="protein sequence ID" value="AAC65329"/>
    <property type="gene ID" value="TP_0338"/>
</dbReference>
<dbReference type="KEGG" id="tpa:TP_0338"/>
<dbReference type="KEGG" id="tpw:TPANIC_0338"/>
<dbReference type="HOGENOM" id="CLU_104656_0_0_12"/>
<dbReference type="OrthoDB" id="362894at2"/>
<dbReference type="Proteomes" id="UP000000811">
    <property type="component" value="Chromosome"/>
</dbReference>
<dbReference type="GO" id="GO:0005886">
    <property type="term" value="C:plasma membrane"/>
    <property type="evidence" value="ECO:0007669"/>
    <property type="project" value="UniProtKB-SubCell"/>
</dbReference>
<keyword id="KW-1003">Cell membrane</keyword>
<keyword id="KW-0472">Membrane</keyword>
<keyword id="KW-1185">Reference proteome</keyword>
<keyword id="KW-0732">Signal</keyword>
<keyword id="KW-0812">Transmembrane</keyword>
<keyword id="KW-1133">Transmembrane helix</keyword>